<gene>
    <name evidence="4" type="primary">AacuH</name>
    <name type="ORF">ASPACDRAFT_46556</name>
</gene>
<protein>
    <recommendedName>
        <fullName evidence="4">Baeyer-Villiger monooxygenase AacuH</fullName>
        <shortName evidence="4">BVMO AacuH</shortName>
        <ecNumber evidence="6">1.-.-.-</ecNumber>
    </recommendedName>
    <alternativeName>
        <fullName evidence="4">Secalonic acid biosynthesis cluster protein H</fullName>
    </alternativeName>
</protein>
<sequence>MTAHIGLSAQHVVDSLGHPDGASRPPVSAESLSRASELLQSNHDTWHIFFREATGHNHMAHSILTALALGASPSELERAYTDTEAIQRPIPAVDPMILTRLDADPQALESLLGWSDLYSTFLTYFQSQIDRHGWQSVVTTYVFSETPLAEKLLIKLYEGMYHSLIHLGLGIEFGQPGIIAEALAQAAAHEDGHIDKLLLGVEAAIAAKDDTRTETTVPKSLVQLVDEVRSHPRIWADLRFGDRWNRMRDSIMDRAADELIPIAAQFRIPASGMMMMAGEHADLLTIRTAEMASTAAYLAGASQSARRPRKIDFFLMHTVTASLFFSVFNAQEWIPRAMRVRLVEWKGRLDLAFYAFCKSPELDACVISDYSDDFTRDMDWAALYAAVNQEHDDGHVAKFMRALRHAERLSRPYEQHPVWAEHFPVKGNMWIKLARMALETTRHSPPDFKWIMGTGFDEAWERPDLKLAENRGQQGQSVP</sequence>
<accession>A0A1L9WLI9</accession>
<name>AACUH_ASPA1</name>
<proteinExistence type="evidence at protein level"/>
<feature type="chain" id="PRO_0000453471" description="Baeyer-Villiger monooxygenase AacuH">
    <location>
        <begin position="1"/>
        <end position="479"/>
    </location>
</feature>
<feature type="region of interest" description="Disordered" evidence="1">
    <location>
        <begin position="14"/>
        <end position="34"/>
    </location>
</feature>
<evidence type="ECO:0000256" key="1">
    <source>
        <dbReference type="SAM" id="MobiDB-lite"/>
    </source>
</evidence>
<evidence type="ECO:0000269" key="2">
    <source>
    </source>
</evidence>
<evidence type="ECO:0000269" key="3">
    <source>
    </source>
</evidence>
<evidence type="ECO:0000303" key="4">
    <source>
    </source>
</evidence>
<evidence type="ECO:0000305" key="5"/>
<evidence type="ECO:0000305" key="6">
    <source>
    </source>
</evidence>
<evidence type="ECO:0000305" key="7">
    <source>
    </source>
</evidence>
<dbReference type="EC" id="1.-.-.-" evidence="6"/>
<dbReference type="EMBL" id="KV878984">
    <property type="protein sequence ID" value="OJJ97029.1"/>
    <property type="molecule type" value="Genomic_DNA"/>
</dbReference>
<dbReference type="RefSeq" id="XP_020053369.1">
    <property type="nucleotide sequence ID" value="XM_020201804.1"/>
</dbReference>
<dbReference type="SMR" id="A0A1L9WLI9"/>
<dbReference type="STRING" id="690307.A0A1L9WLI9"/>
<dbReference type="GeneID" id="30975618"/>
<dbReference type="VEuPathDB" id="FungiDB:ASPACDRAFT_46556"/>
<dbReference type="OMA" id="KHHCFWG"/>
<dbReference type="OrthoDB" id="10004862at2759"/>
<dbReference type="Proteomes" id="UP000184546">
    <property type="component" value="Unassembled WGS sequence"/>
</dbReference>
<dbReference type="GO" id="GO:0016491">
    <property type="term" value="F:oxidoreductase activity"/>
    <property type="evidence" value="ECO:0007669"/>
    <property type="project" value="UniProtKB-KW"/>
</dbReference>
<dbReference type="InterPro" id="IPR025337">
    <property type="entry name" value="Questin_oxidase-like"/>
</dbReference>
<dbReference type="PANTHER" id="PTHR35870:SF7">
    <property type="entry name" value="BAEYER-VILLIGER OXIDASE MDPL"/>
    <property type="match status" value="1"/>
</dbReference>
<dbReference type="PANTHER" id="PTHR35870">
    <property type="entry name" value="PROTEIN, PUTATIVE (AFU_ORTHOLOGUE AFUA_5G03330)-RELATED"/>
    <property type="match status" value="1"/>
</dbReference>
<dbReference type="Pfam" id="PF14027">
    <property type="entry name" value="Questin_oxidase"/>
    <property type="match status" value="1"/>
</dbReference>
<reference key="1">
    <citation type="journal article" date="2017" name="Genome Biol.">
        <title>Comparative genomics reveals high biological diversity and specific adaptations in the industrially and medically important fungal genus Aspergillus.</title>
        <authorList>
            <person name="de Vries R.P."/>
            <person name="Riley R."/>
            <person name="Wiebenga A."/>
            <person name="Aguilar-Osorio G."/>
            <person name="Amillis S."/>
            <person name="Uchima C.A."/>
            <person name="Anderluh G."/>
            <person name="Asadollahi M."/>
            <person name="Askin M."/>
            <person name="Barry K."/>
            <person name="Battaglia E."/>
            <person name="Bayram O."/>
            <person name="Benocci T."/>
            <person name="Braus-Stromeyer S.A."/>
            <person name="Caldana C."/>
            <person name="Canovas D."/>
            <person name="Cerqueira G.C."/>
            <person name="Chen F."/>
            <person name="Chen W."/>
            <person name="Choi C."/>
            <person name="Clum A."/>
            <person name="Dos Santos R.A."/>
            <person name="Damasio A.R."/>
            <person name="Diallinas G."/>
            <person name="Emri T."/>
            <person name="Fekete E."/>
            <person name="Flipphi M."/>
            <person name="Freyberg S."/>
            <person name="Gallo A."/>
            <person name="Gournas C."/>
            <person name="Habgood R."/>
            <person name="Hainaut M."/>
            <person name="Harispe M.L."/>
            <person name="Henrissat B."/>
            <person name="Hilden K.S."/>
            <person name="Hope R."/>
            <person name="Hossain A."/>
            <person name="Karabika E."/>
            <person name="Karaffa L."/>
            <person name="Karanyi Z."/>
            <person name="Krasevec N."/>
            <person name="Kuo A."/>
            <person name="Kusch H."/>
            <person name="LaButti K."/>
            <person name="Lagendijk E.L."/>
            <person name="Lapidus A."/>
            <person name="Levasseur A."/>
            <person name="Lindquist E."/>
            <person name="Lipzen A."/>
            <person name="Logrieco A.F."/>
            <person name="MacCabe A."/>
            <person name="Maekelae M.R."/>
            <person name="Malavazi I."/>
            <person name="Melin P."/>
            <person name="Meyer V."/>
            <person name="Mielnichuk N."/>
            <person name="Miskei M."/>
            <person name="Molnar A.P."/>
            <person name="Mule G."/>
            <person name="Ngan C.Y."/>
            <person name="Orejas M."/>
            <person name="Orosz E."/>
            <person name="Ouedraogo J.P."/>
            <person name="Overkamp K.M."/>
            <person name="Park H.-S."/>
            <person name="Perrone G."/>
            <person name="Piumi F."/>
            <person name="Punt P.J."/>
            <person name="Ram A.F."/>
            <person name="Ramon A."/>
            <person name="Rauscher S."/>
            <person name="Record E."/>
            <person name="Riano-Pachon D.M."/>
            <person name="Robert V."/>
            <person name="Roehrig J."/>
            <person name="Ruller R."/>
            <person name="Salamov A."/>
            <person name="Salih N.S."/>
            <person name="Samson R.A."/>
            <person name="Sandor E."/>
            <person name="Sanguinetti M."/>
            <person name="Schuetze T."/>
            <person name="Sepcic K."/>
            <person name="Shelest E."/>
            <person name="Sherlock G."/>
            <person name="Sophianopoulou V."/>
            <person name="Squina F.M."/>
            <person name="Sun H."/>
            <person name="Susca A."/>
            <person name="Todd R.B."/>
            <person name="Tsang A."/>
            <person name="Unkles S.E."/>
            <person name="van de Wiele N."/>
            <person name="van Rossen-Uffink D."/>
            <person name="Oliveira J.V."/>
            <person name="Vesth T.C."/>
            <person name="Visser J."/>
            <person name="Yu J.-H."/>
            <person name="Zhou M."/>
            <person name="Andersen M.R."/>
            <person name="Archer D.B."/>
            <person name="Baker S.E."/>
            <person name="Benoit I."/>
            <person name="Brakhage A.A."/>
            <person name="Braus G.H."/>
            <person name="Fischer R."/>
            <person name="Frisvad J.C."/>
            <person name="Goldman G.H."/>
            <person name="Houbraken J."/>
            <person name="Oakley B."/>
            <person name="Pocsi I."/>
            <person name="Scazzocchio C."/>
            <person name="Seiboth B."/>
            <person name="vanKuyk P.A."/>
            <person name="Wortman J."/>
            <person name="Dyer P.S."/>
            <person name="Grigoriev I.V."/>
        </authorList>
    </citation>
    <scope>NUCLEOTIDE SEQUENCE [LARGE SCALE GENOMIC DNA]</scope>
    <source>
        <strain>ATCC 16872 / CBS 172.66 / WB 5094</strain>
    </source>
</reference>
<reference key="2">
    <citation type="journal article" date="2017" name="Neoplasma">
        <title>Secalonic acid- F inhibited cell growth more effectively than 5-fluorouracil on hepatocellular carcinoma in vitro and in vivo.</title>
        <authorList>
            <person name="Gao X."/>
            <person name="Sun H.L."/>
            <person name="Liu D.S."/>
            <person name="Zhang J.R."/>
            <person name="Zhang J."/>
            <person name="Yan M.M."/>
            <person name="Pan X.H."/>
        </authorList>
    </citation>
    <scope>BIOTECHNOLOGY</scope>
</reference>
<reference key="3">
    <citation type="journal article" date="2018" name="Curr. Microbiol.">
        <title>Secondary Metabolites and Their Biological Activity from Aspergillus aculeatus KKU-CT2.</title>
        <authorList>
            <person name="Yodsing N."/>
            <person name="Lekphrom R."/>
            <person name="Sangsopha W."/>
            <person name="Aimi T."/>
            <person name="Boonlue S."/>
        </authorList>
    </citation>
    <scope>BIOTECHNOLOGY</scope>
</reference>
<reference key="4">
    <citation type="journal article" date="2019" name="Chem. Sci.">
        <title>Structure revision of cryptosporioptides and determination of the genetic basis for dimeric xanthone biosynthesis in fungi.</title>
        <authorList>
            <person name="Greco C."/>
            <person name="de Mattos-Shipley K."/>
            <person name="Bailey A.M."/>
            <person name="Mulholland N.P."/>
            <person name="Vincent J.L."/>
            <person name="Willis C.L."/>
            <person name="Cox R.J."/>
            <person name="Simpson T.J."/>
        </authorList>
    </citation>
    <scope>IDENTIFICATION</scope>
    <scope>FUNCTION</scope>
</reference>
<reference key="5">
    <citation type="journal article" date="2019" name="Molecules">
        <title>Secalonic Acid-F, a Novel Mycotoxin, Represses the Progression of Hepatocellular Carcinoma via MARCH1 Regulation of the PI3K/AKT/beta-catenin Signaling Pathway.</title>
        <authorList>
            <person name="Xie L."/>
            <person name="Li M."/>
            <person name="Liu D."/>
            <person name="Wang X."/>
            <person name="Wang P."/>
            <person name="Dai H."/>
            <person name="Yang W."/>
            <person name="Liu W."/>
            <person name="Hu X."/>
            <person name="Zhao M."/>
        </authorList>
    </citation>
    <scope>BIOTECHNOLOGY</scope>
</reference>
<reference key="6">
    <citation type="journal article" date="2020" name="ACS Omega">
        <title>Discovery of a Secalonic Acid Derivative from Aspergillus aculeatus, an Endophyte of Rosa damascena Mill., Triggers Apoptosis in MDA-MB-231 Triple Negative Breast Cancer Cells.</title>
        <authorList>
            <person name="Farooq S."/>
            <person name="Qayum A."/>
            <person name="Nalli Y."/>
            <person name="Lauro G."/>
            <person name="Chini M.G."/>
            <person name="Bifulco G."/>
            <person name="Chaubey A."/>
            <person name="Singh S.K."/>
            <person name="Riyaz-Ul-Hassan S."/>
            <person name="Ali A."/>
        </authorList>
    </citation>
    <scope>BIOTECHNOLOGY</scope>
</reference>
<reference key="7">
    <citation type="journal article" date="2021" name="J. Nat. Prod.">
        <title>Heterologous biosynthesis of tetrahydroxanthone dimers: determination of key factors for selective or divergent synthesis.</title>
        <authorList>
            <person name="Wei X."/>
            <person name="Chen X."/>
            <person name="Chen L."/>
            <person name="Yan D."/>
            <person name="Wang W.G."/>
            <person name="Matsuda Y."/>
        </authorList>
    </citation>
    <scope>FUNCTION</scope>
    <scope>CATALYTIC ACTIVITY</scope>
    <scope>PATHWAY</scope>
</reference>
<keyword id="KW-0560">Oxidoreductase</keyword>
<keyword id="KW-1185">Reference proteome</keyword>
<organism>
    <name type="scientific">Aspergillus aculeatus (strain ATCC 16872 / CBS 172.66 / WB 5094)</name>
    <dbReference type="NCBI Taxonomy" id="690307"/>
    <lineage>
        <taxon>Eukaryota</taxon>
        <taxon>Fungi</taxon>
        <taxon>Dikarya</taxon>
        <taxon>Ascomycota</taxon>
        <taxon>Pezizomycotina</taxon>
        <taxon>Eurotiomycetes</taxon>
        <taxon>Eurotiomycetidae</taxon>
        <taxon>Eurotiales</taxon>
        <taxon>Aspergillaceae</taxon>
        <taxon>Aspergillus</taxon>
        <taxon>Aspergillus subgen. Circumdati</taxon>
    </lineage>
</organism>
<comment type="function">
    <text evidence="2 3 7">Baeyer-Villiger monooxygenase; part of the gene cluster that mediates the biosynthesis of the tetrahydroxanthone dimer secalonic acid D (PubMed:30996871, PubMed:33891392). The pathway begins with the synthesis of atrochrysone thioester by the polyketide synthase AacuL (Probable). The atrochrysone carboxyl ACP thioesterase AacuM then breaks the thioester bond and releases the atrochrysone carboxylic acid from AacuL (Probable). Atrochrysone carboxylic acid is decarboxylated by the decarboxylase AacuI, and oxidized by the anthrone oxygenase AacuG to yield emodin (Probable). Emodin is then reduced to emodin hydroquinone by a yet unidentified oxidoreductase (Probable). A-ring reduction by the short chain dehydrogenase AacuN, dehydration by the scytalone dehydratase-like protein AacuK and probable spontaneous re-oxidation, results in overall deoxygenation to chrysophanol (PubMed:33891392). Baeyer-Villiger oxidation by the Baeyer-Villiger monooxygenase (BVMO) AacuH then yields monodictyphenone (PubMed:33891392). Monodictyphenone is transformed into compounds with the tetrahydroxanthone skeleton via methylesterification by the methyltransferase AacuQ, followed by the action of the flavin-dependent monooxygenase AacuC, the isomerase AacuP, and the short chain dehydrogenase/reductase AacuF or AacuD (PubMed:33891392). AacuF and AacuD should accept the same compound as a substrate but perform the ketoreduction with a different stereoselectivity, thus yielding blennolides B and A, respectively (PubMed:33891392). In the final step of the biosynthesis, the cytochrome P450 monooxygenase AacuE accepts blennolide B and/or blennolide A to conduct the dimerization reaction to furnish the tetrahydroxanthone dimers, secalonic acids D, B, and F (PubMed:33891392).</text>
</comment>
<comment type="pathway">
    <text evidence="2">Secondary metabolite biosynthesis.</text>
</comment>
<comment type="similarity">
    <text evidence="5">Belongs to the AflY oxidoreductase family.</text>
</comment>